<evidence type="ECO:0000250" key="1"/>
<evidence type="ECO:0000250" key="2">
    <source>
        <dbReference type="UniProtKB" id="O74859"/>
    </source>
</evidence>
<evidence type="ECO:0000250" key="3">
    <source>
        <dbReference type="UniProtKB" id="Q7Z2E3"/>
    </source>
</evidence>
<evidence type="ECO:0000255" key="4">
    <source>
        <dbReference type="PROSITE-ProRule" id="PRU00464"/>
    </source>
</evidence>
<evidence type="ECO:0000256" key="5">
    <source>
        <dbReference type="SAM" id="MobiDB-lite"/>
    </source>
</evidence>
<evidence type="ECO:0000269" key="6">
    <source>
    </source>
</evidence>
<organism>
    <name type="scientific">Gallus gallus</name>
    <name type="common">Chicken</name>
    <dbReference type="NCBI Taxonomy" id="9031"/>
    <lineage>
        <taxon>Eukaryota</taxon>
        <taxon>Metazoa</taxon>
        <taxon>Chordata</taxon>
        <taxon>Craniata</taxon>
        <taxon>Vertebrata</taxon>
        <taxon>Euteleostomi</taxon>
        <taxon>Archelosauria</taxon>
        <taxon>Archosauria</taxon>
        <taxon>Dinosauria</taxon>
        <taxon>Saurischia</taxon>
        <taxon>Theropoda</taxon>
        <taxon>Coelurosauria</taxon>
        <taxon>Aves</taxon>
        <taxon>Neognathae</taxon>
        <taxon>Galloanserae</taxon>
        <taxon>Galliformes</taxon>
        <taxon>Phasianidae</taxon>
        <taxon>Phasianinae</taxon>
        <taxon>Gallus</taxon>
    </lineage>
</organism>
<gene>
    <name type="primary">APTX</name>
</gene>
<name>APTX_CHICK</name>
<sequence length="316" mass="36018">HASARGEGFLLLKADCNKGYVTVKQIGVNPTSVDLVDVGKDEEVKMRPGQVLHIVNKLYPFVVQFGEESEESVMEAEEKIQTEKRPCEDSCENDDIENVPKKAKKMEVVDTQSSSADLRPSKSSVSPHEGTTSRKEHLGHWSQGLKSSMQDPKVQVYKDEKTVVIKDKYPKARYHWLVLPWDSISSLKSVTREHLGLLEHMHAVGQKMIQQCPAKESLEFRLGYHAIPSMSQLHLHVISQDFDSPALKTKKHWNSFTTEYFLNSEEVIEMVRSKGKVTVNDQASELLKLPLRCHLCKQQLSTIPQLKEHLKKHWTK</sequence>
<accession>P61798</accession>
<protein>
    <recommendedName>
        <fullName>Aprataxin</fullName>
        <ecNumber evidence="6">3.6.1.71</ecNumber>
        <ecNumber evidence="2">3.6.1.72</ecNumber>
    </recommendedName>
    <alternativeName>
        <fullName>Forkhead-associated domain histidine triad-like protein</fullName>
        <shortName>FHA-HIT</shortName>
    </alternativeName>
</protein>
<feature type="chain" id="PRO_0000109843" description="Aprataxin">
    <location>
        <begin position="1" status="less than"/>
        <end position="316"/>
    </location>
</feature>
<feature type="domain" description="FHA-like">
    <location>
        <begin position="1" status="less than"/>
        <end position="38"/>
    </location>
</feature>
<feature type="domain" description="HIT" evidence="4">
    <location>
        <begin position="142"/>
        <end position="247"/>
    </location>
</feature>
<feature type="zinc finger region" description="C2H2-type">
    <location>
        <begin position="291"/>
        <end position="313"/>
    </location>
</feature>
<feature type="region of interest" description="Disordered" evidence="5">
    <location>
        <begin position="104"/>
        <end position="142"/>
    </location>
</feature>
<feature type="region of interest" description="Interaction with DNA substrate" evidence="3">
    <location>
        <begin position="167"/>
        <end position="171"/>
    </location>
</feature>
<feature type="region of interest" description="Interaction with DNA substrate" evidence="3">
    <location>
        <begin position="229"/>
        <end position="230"/>
    </location>
</feature>
<feature type="short sequence motif" description="Histidine triad motif" evidence="4">
    <location>
        <begin position="232"/>
        <end position="236"/>
    </location>
</feature>
<feature type="compositionally biased region" description="Polar residues" evidence="5">
    <location>
        <begin position="110"/>
        <end position="130"/>
    </location>
</feature>
<feature type="active site" description="Tele-AMP-histidine intermediate" evidence="3">
    <location>
        <position position="234"/>
    </location>
</feature>
<feature type="site" description="Interaction with DNA substrate" evidence="3">
    <location>
        <position position="148"/>
    </location>
</feature>
<feature type="site" description="Interaction with DNA substrate" evidence="3">
    <location>
        <position position="225"/>
    </location>
</feature>
<feature type="site" description="Interaction with DNA substrate" evidence="3">
    <location>
        <position position="236"/>
    </location>
</feature>
<feature type="site" description="Interaction with DNA substrate" evidence="3">
    <location>
        <position position="251"/>
    </location>
</feature>
<feature type="non-terminal residue">
    <location>
        <position position="1"/>
    </location>
</feature>
<dbReference type="EC" id="3.6.1.71" evidence="6"/>
<dbReference type="EC" id="3.6.1.72" evidence="2"/>
<dbReference type="EMBL" id="AY208845">
    <property type="protein sequence ID" value="AAP86335.1"/>
    <property type="molecule type" value="mRNA"/>
</dbReference>
<dbReference type="SMR" id="P61798"/>
<dbReference type="FunCoup" id="P61798">
    <property type="interactions" value="1274"/>
</dbReference>
<dbReference type="STRING" id="9031.ENSGALP00000003019"/>
<dbReference type="PaxDb" id="9031-ENSGALP00000003019"/>
<dbReference type="VEuPathDB" id="HostDB:geneid_395173"/>
<dbReference type="eggNOG" id="KOG0562">
    <property type="taxonomic scope" value="Eukaryota"/>
</dbReference>
<dbReference type="eggNOG" id="KOG2134">
    <property type="taxonomic scope" value="Eukaryota"/>
</dbReference>
<dbReference type="InParanoid" id="P61798"/>
<dbReference type="OrthoDB" id="3512845at2759"/>
<dbReference type="PhylomeDB" id="P61798"/>
<dbReference type="BRENDA" id="3.6.1.71">
    <property type="organism ID" value="1306"/>
</dbReference>
<dbReference type="Proteomes" id="UP000000539">
    <property type="component" value="Unassembled WGS sequence"/>
</dbReference>
<dbReference type="GO" id="GO:0005730">
    <property type="term" value="C:nucleolus"/>
    <property type="evidence" value="ECO:0007669"/>
    <property type="project" value="UniProtKB-SubCell"/>
</dbReference>
<dbReference type="GO" id="GO:0005654">
    <property type="term" value="C:nucleoplasm"/>
    <property type="evidence" value="ECO:0007669"/>
    <property type="project" value="UniProtKB-SubCell"/>
</dbReference>
<dbReference type="GO" id="GO:0005634">
    <property type="term" value="C:nucleus"/>
    <property type="evidence" value="ECO:0000318"/>
    <property type="project" value="GO_Central"/>
</dbReference>
<dbReference type="GO" id="GO:0033699">
    <property type="term" value="F:DNA 5'-adenosine monophosphate hydrolase activity"/>
    <property type="evidence" value="ECO:0000315"/>
    <property type="project" value="UniProtKB"/>
</dbReference>
<dbReference type="GO" id="GO:0120108">
    <property type="term" value="F:DNA-3'-diphospho-5'-guanosine diphosphatase"/>
    <property type="evidence" value="ECO:0007669"/>
    <property type="project" value="UniProtKB-EC"/>
</dbReference>
<dbReference type="GO" id="GO:0003725">
    <property type="term" value="F:double-stranded RNA binding"/>
    <property type="evidence" value="ECO:0000318"/>
    <property type="project" value="GO_Central"/>
</dbReference>
<dbReference type="GO" id="GO:0030983">
    <property type="term" value="F:mismatched DNA binding"/>
    <property type="evidence" value="ECO:0000318"/>
    <property type="project" value="GO_Central"/>
</dbReference>
<dbReference type="GO" id="GO:1990165">
    <property type="term" value="F:single-strand break-containing DNA binding"/>
    <property type="evidence" value="ECO:0000318"/>
    <property type="project" value="GO_Central"/>
</dbReference>
<dbReference type="GO" id="GO:0003697">
    <property type="term" value="F:single-stranded DNA binding"/>
    <property type="evidence" value="ECO:0000318"/>
    <property type="project" value="GO_Central"/>
</dbReference>
<dbReference type="GO" id="GO:0008270">
    <property type="term" value="F:zinc ion binding"/>
    <property type="evidence" value="ECO:0007669"/>
    <property type="project" value="UniProtKB-KW"/>
</dbReference>
<dbReference type="GO" id="GO:0000012">
    <property type="term" value="P:single strand break repair"/>
    <property type="evidence" value="ECO:0000318"/>
    <property type="project" value="GO_Central"/>
</dbReference>
<dbReference type="CDD" id="cd01278">
    <property type="entry name" value="aprataxin_related"/>
    <property type="match status" value="1"/>
</dbReference>
<dbReference type="FunFam" id="3.30.428.10:FF:000004">
    <property type="entry name" value="aprataxin isoform X2"/>
    <property type="match status" value="1"/>
</dbReference>
<dbReference type="Gene3D" id="2.60.200.20">
    <property type="match status" value="1"/>
</dbReference>
<dbReference type="Gene3D" id="3.30.428.10">
    <property type="entry name" value="HIT-like"/>
    <property type="match status" value="1"/>
</dbReference>
<dbReference type="InterPro" id="IPR041388">
    <property type="entry name" value="FHA_2"/>
</dbReference>
<dbReference type="InterPro" id="IPR019808">
    <property type="entry name" value="Histidine_triad_CS"/>
</dbReference>
<dbReference type="InterPro" id="IPR011146">
    <property type="entry name" value="HIT-like"/>
</dbReference>
<dbReference type="InterPro" id="IPR036265">
    <property type="entry name" value="HIT-like_sf"/>
</dbReference>
<dbReference type="InterPro" id="IPR008984">
    <property type="entry name" value="SMAD_FHA_dom_sf"/>
</dbReference>
<dbReference type="InterPro" id="IPR032566">
    <property type="entry name" value="Znf-C2HE"/>
</dbReference>
<dbReference type="InterPro" id="IPR013087">
    <property type="entry name" value="Znf_C2H2_type"/>
</dbReference>
<dbReference type="PANTHER" id="PTHR12486:SF4">
    <property type="entry name" value="APRATAXIN"/>
    <property type="match status" value="1"/>
</dbReference>
<dbReference type="PANTHER" id="PTHR12486">
    <property type="entry name" value="APRATAXIN-RELATED"/>
    <property type="match status" value="1"/>
</dbReference>
<dbReference type="Pfam" id="PF11969">
    <property type="entry name" value="DcpS_C"/>
    <property type="match status" value="1"/>
</dbReference>
<dbReference type="Pfam" id="PF17913">
    <property type="entry name" value="FHA_2"/>
    <property type="match status" value="1"/>
</dbReference>
<dbReference type="Pfam" id="PF16278">
    <property type="entry name" value="zf-C2HE"/>
    <property type="match status" value="1"/>
</dbReference>
<dbReference type="SUPFAM" id="SSF54197">
    <property type="entry name" value="HIT-like"/>
    <property type="match status" value="1"/>
</dbReference>
<dbReference type="SUPFAM" id="SSF49879">
    <property type="entry name" value="SMAD/FHA domain"/>
    <property type="match status" value="1"/>
</dbReference>
<dbReference type="PROSITE" id="PS00892">
    <property type="entry name" value="HIT_1"/>
    <property type="match status" value="1"/>
</dbReference>
<dbReference type="PROSITE" id="PS51084">
    <property type="entry name" value="HIT_2"/>
    <property type="match status" value="1"/>
</dbReference>
<dbReference type="PROSITE" id="PS00028">
    <property type="entry name" value="ZINC_FINGER_C2H2_1"/>
    <property type="match status" value="1"/>
</dbReference>
<reference key="1">
    <citation type="submission" date="2002-12" db="EMBL/GenBank/DDBJ databases">
        <title>Identification of human FHA-HIT gene homolog in chicken.</title>
        <authorList>
            <person name="Chen Y."/>
            <person name="Huang C.-H."/>
        </authorList>
    </citation>
    <scope>NUCLEOTIDE SEQUENCE [MRNA]</scope>
</reference>
<reference key="2">
    <citation type="journal article" date="2006" name="Nature">
        <title>The neurodegenerative disease protein aprataxin resolves abortive DNA ligation intermediates.</title>
        <authorList>
            <person name="Ahel I."/>
            <person name="Rass U."/>
            <person name="El-Khamisy S.F."/>
            <person name="Katyal S."/>
            <person name="Clements P.M."/>
            <person name="McKinnon P.J."/>
            <person name="Caldecott K.W."/>
            <person name="West S.C."/>
        </authorList>
    </citation>
    <scope>FUNCTION</scope>
    <scope>CATALYTIC ACTIVITY</scope>
</reference>
<keyword id="KW-0227">DNA damage</keyword>
<keyword id="KW-0234">DNA repair</keyword>
<keyword id="KW-0238">DNA-binding</keyword>
<keyword id="KW-0378">Hydrolase</keyword>
<keyword id="KW-0479">Metal-binding</keyword>
<keyword id="KW-0539">Nucleus</keyword>
<keyword id="KW-1185">Reference proteome</keyword>
<keyword id="KW-0862">Zinc</keyword>
<keyword id="KW-0863">Zinc-finger</keyword>
<comment type="function">
    <text evidence="2 3 6">DNA-binding protein involved in single-strand DNA break repair, double-strand DNA break repair and base excision repair. Resolves abortive DNA ligation intermediates formed either at base excision sites, or when DNA ligases attempt to repair non-ligatable breaks induced by reactive oxygen species. Catalyzes the release of adenylate groups covalently linked to 5'-phosphate termini, resulting in the production of 5'-phosphate termini that can be efficiently rejoined (PubMed:16964241). Also able to hydrolyze adenosine 5'-monophosphoramidate (AMP-NH(2)) and diadenosine tetraphosphate (AppppA), but with lower catalytic activity (By similarity). Likewise, catalyzes the release of 3'-linked guanosine (DNAppG) and inosine (DNAppI) from DNA, but has higher specific activity with 5'-linked adenosine (AppDNA) (By similarity).</text>
</comment>
<comment type="catalytic activity">
    <reaction evidence="6">
        <text>a 5'-end adenosine-5'-diphospho-5'-2'-deoxyribonucleoside-DNA + H2O = a 5'-end 5'-phospho-2'-deoxyribonucleoside-DNA + AMP + 2 H(+)</text>
        <dbReference type="Rhea" id="RHEA:52128"/>
        <dbReference type="Rhea" id="RHEA-COMP:13180"/>
        <dbReference type="Rhea" id="RHEA-COMP:13181"/>
        <dbReference type="ChEBI" id="CHEBI:15377"/>
        <dbReference type="ChEBI" id="CHEBI:15378"/>
        <dbReference type="ChEBI" id="CHEBI:136412"/>
        <dbReference type="ChEBI" id="CHEBI:136413"/>
        <dbReference type="ChEBI" id="CHEBI:456215"/>
        <dbReference type="EC" id="3.6.1.71"/>
    </reaction>
</comment>
<comment type="catalytic activity">
    <reaction evidence="6">
        <text>a 5'-end adenosine-5'-diphospho-5'-ribonucleoside-2'-deoxyribonucleotide-DNA + H2O = a 5'-end 5'-phospho-ribonucleoside-2'-deoxyribonucleotide-DNA + AMP + 2 H(+)</text>
        <dbReference type="Rhea" id="RHEA:52132"/>
        <dbReference type="Rhea" id="RHEA-COMP:13182"/>
        <dbReference type="Rhea" id="RHEA-COMP:13183"/>
        <dbReference type="ChEBI" id="CHEBI:15377"/>
        <dbReference type="ChEBI" id="CHEBI:15378"/>
        <dbReference type="ChEBI" id="CHEBI:136414"/>
        <dbReference type="ChEBI" id="CHEBI:136415"/>
        <dbReference type="ChEBI" id="CHEBI:456215"/>
        <dbReference type="EC" id="3.6.1.71"/>
    </reaction>
</comment>
<comment type="catalytic activity">
    <reaction evidence="2">
        <text>a 3'-end 2'-deoxyribonucleotide-3'-diphospho-5'-guanosine-DNA + H2O = a 3'-end 2'-deoxyribonucleotide 3'-phosphate-DNA + GMP + 2 H(+)</text>
        <dbReference type="Rhea" id="RHEA:52140"/>
        <dbReference type="Rhea" id="RHEA-COMP:13186"/>
        <dbReference type="Rhea" id="RHEA-COMP:13187"/>
        <dbReference type="ChEBI" id="CHEBI:15377"/>
        <dbReference type="ChEBI" id="CHEBI:15378"/>
        <dbReference type="ChEBI" id="CHEBI:58115"/>
        <dbReference type="ChEBI" id="CHEBI:136419"/>
        <dbReference type="ChEBI" id="CHEBI:136420"/>
        <dbReference type="EC" id="3.6.1.72"/>
    </reaction>
</comment>
<comment type="subcellular location">
    <subcellularLocation>
        <location evidence="3">Nucleus</location>
        <location evidence="3">Nucleoplasm</location>
    </subcellularLocation>
    <subcellularLocation>
        <location evidence="3">Nucleus</location>
        <location evidence="3">Nucleolus</location>
    </subcellularLocation>
</comment>
<comment type="domain">
    <text evidence="3">The histidine triad, also called HIT motif, forms part of the binding loop for the alpha-phosphate of purine mononucleotide.</text>
</comment>
<comment type="domain">
    <text evidence="1">The HIT domain is required for enzymatic activity.</text>
</comment>
<comment type="domain">
    <text evidence="1">The C2H2-type zinc finger mediates DNA-binding.</text>
</comment>
<proteinExistence type="evidence at protein level"/>